<comment type="function">
    <text>Mitochondrial membrane ATP synthase (F(1)F(0) ATP synthase or Complex V) produces ATP from ADP in the presence of a proton gradient across the membrane which is generated by electron transport complexes of the respiratory chain. F-type ATPases consist of two structural domains, F(1) - containing the extramembraneous catalytic core, and F(0) - containing the membrane proton channel, linked together by a central stalk and a peripheral stalk. During catalysis, ATP synthesis in the catalytic domain of F(1) is coupled via a rotary mechanism of the central stalk subunits to proton translocation. Part of the complex F(0) domain. Minor subunit located with subunit a in the membrane.</text>
</comment>
<comment type="subunit">
    <text evidence="2">Subunit of the F-type ATPase which has 2 components, CF(1) - the catalytic core - and CF(0) - the membrane proton channel.</text>
</comment>
<comment type="subcellular location">
    <subcellularLocation>
        <location evidence="1">Mitochondrion membrane</location>
    </subcellularLocation>
</comment>
<comment type="similarity">
    <text evidence="2">Belongs to the ATPase g subunit family.</text>
</comment>
<name>ATPL2_CAEEL</name>
<gene>
    <name evidence="3" type="primary">asg-2</name>
    <name evidence="3" type="ORF">C53B7.4</name>
</gene>
<evidence type="ECO:0000250" key="1"/>
<evidence type="ECO:0000305" key="2"/>
<evidence type="ECO:0000312" key="3">
    <source>
        <dbReference type="WormBase" id="C53B7.4"/>
    </source>
</evidence>
<proteinExistence type="inferred from homology"/>
<organism>
    <name type="scientific">Caenorhabditis elegans</name>
    <dbReference type="NCBI Taxonomy" id="6239"/>
    <lineage>
        <taxon>Eukaryota</taxon>
        <taxon>Metazoa</taxon>
        <taxon>Ecdysozoa</taxon>
        <taxon>Nematoda</taxon>
        <taxon>Chromadorea</taxon>
        <taxon>Rhabditida</taxon>
        <taxon>Rhabditina</taxon>
        <taxon>Rhabditomorpha</taxon>
        <taxon>Rhabditoidea</taxon>
        <taxon>Rhabditidae</taxon>
        <taxon>Peloderinae</taxon>
        <taxon>Caenorhabditis</taxon>
    </lineage>
</organism>
<protein>
    <recommendedName>
        <fullName>Probable ATP synthase subunit g 2, mitochondrial</fullName>
        <shortName>ATPase subunit g 2</shortName>
    </recommendedName>
</protein>
<accession>Q18803</accession>
<reference key="1">
    <citation type="journal article" date="1998" name="Science">
        <title>Genome sequence of the nematode C. elegans: a platform for investigating biology.</title>
        <authorList>
            <consortium name="The C. elegans sequencing consortium"/>
        </authorList>
    </citation>
    <scope>NUCLEOTIDE SEQUENCE [LARGE SCALE GENOMIC DNA]</scope>
    <source>
        <strain>Bristol N2</strain>
    </source>
</reference>
<sequence>MAAPKLGFFEKIANLTGALYRHQHAQFPRRFAILKAVGKHELAPPRQADWPAIKADWAKVQSFIQTGGYKNLSIREGLVYTAVTLEVVFWFFVGEMIGRRYIFGYLVPADYVSKSTKKTVKEQEALAALEN</sequence>
<feature type="chain" id="PRO_0000071694" description="Probable ATP synthase subunit g 2, mitochondrial">
    <location>
        <begin position="1"/>
        <end position="131"/>
    </location>
</feature>
<dbReference type="EMBL" id="BX284606">
    <property type="protein sequence ID" value="CCD67887.1"/>
    <property type="molecule type" value="Genomic_DNA"/>
</dbReference>
<dbReference type="PIR" id="T28801">
    <property type="entry name" value="T28801"/>
</dbReference>
<dbReference type="RefSeq" id="NP_509152.1">
    <property type="nucleotide sequence ID" value="NM_076751.8"/>
</dbReference>
<dbReference type="SMR" id="Q18803"/>
<dbReference type="BioGRID" id="45884">
    <property type="interactions" value="40"/>
</dbReference>
<dbReference type="FunCoup" id="Q18803">
    <property type="interactions" value="895"/>
</dbReference>
<dbReference type="STRING" id="6239.C53B7.4.1"/>
<dbReference type="PaxDb" id="6239-C53B7.4"/>
<dbReference type="PeptideAtlas" id="Q18803"/>
<dbReference type="EnsemblMetazoa" id="C53B7.4.1">
    <property type="protein sequence ID" value="C53B7.4.1"/>
    <property type="gene ID" value="WBGene00000210"/>
</dbReference>
<dbReference type="GeneID" id="180956"/>
<dbReference type="KEGG" id="cel:CELE_C53B7.4"/>
<dbReference type="UCSC" id="C53B7.4">
    <property type="organism name" value="c. elegans"/>
</dbReference>
<dbReference type="AGR" id="WB:WBGene00000210"/>
<dbReference type="CTD" id="180956"/>
<dbReference type="WormBase" id="C53B7.4">
    <property type="protein sequence ID" value="CE06974"/>
    <property type="gene ID" value="WBGene00000210"/>
    <property type="gene designation" value="asg-2"/>
</dbReference>
<dbReference type="eggNOG" id="KOG4103">
    <property type="taxonomic scope" value="Eukaryota"/>
</dbReference>
<dbReference type="GeneTree" id="ENSGT00390000009724"/>
<dbReference type="HOGENOM" id="CLU_152793_1_0_1"/>
<dbReference type="InParanoid" id="Q18803"/>
<dbReference type="OMA" id="KSGAWKN"/>
<dbReference type="OrthoDB" id="437at2759"/>
<dbReference type="PhylomeDB" id="Q18803"/>
<dbReference type="Reactome" id="R-CEL-163210">
    <property type="pathway name" value="Formation of ATP by chemiosmotic coupling"/>
</dbReference>
<dbReference type="Reactome" id="R-CEL-8949613">
    <property type="pathway name" value="Cristae formation"/>
</dbReference>
<dbReference type="Reactome" id="R-CEL-9837999">
    <property type="pathway name" value="Mitochondrial protein degradation"/>
</dbReference>
<dbReference type="PRO" id="PR:Q18803"/>
<dbReference type="Proteomes" id="UP000001940">
    <property type="component" value="Chromosome X"/>
</dbReference>
<dbReference type="Bgee" id="WBGene00000210">
    <property type="expression patterns" value="Expressed in pharyngeal muscle cell (C elegans) and 4 other cell types or tissues"/>
</dbReference>
<dbReference type="GO" id="GO:0031966">
    <property type="term" value="C:mitochondrial membrane"/>
    <property type="evidence" value="ECO:0007669"/>
    <property type="project" value="UniProtKB-SubCell"/>
</dbReference>
<dbReference type="GO" id="GO:0005739">
    <property type="term" value="C:mitochondrion"/>
    <property type="evidence" value="ECO:0000314"/>
    <property type="project" value="WormBase"/>
</dbReference>
<dbReference type="GO" id="GO:0097730">
    <property type="term" value="C:non-motile cilium"/>
    <property type="evidence" value="ECO:0000314"/>
    <property type="project" value="WormBase"/>
</dbReference>
<dbReference type="GO" id="GO:0045259">
    <property type="term" value="C:proton-transporting ATP synthase complex"/>
    <property type="evidence" value="ECO:0007669"/>
    <property type="project" value="UniProtKB-KW"/>
</dbReference>
<dbReference type="GO" id="GO:0015078">
    <property type="term" value="F:proton transmembrane transporter activity"/>
    <property type="evidence" value="ECO:0007669"/>
    <property type="project" value="InterPro"/>
</dbReference>
<dbReference type="GO" id="GO:0015986">
    <property type="term" value="P:proton motive force-driven ATP synthesis"/>
    <property type="evidence" value="ECO:0000318"/>
    <property type="project" value="GO_Central"/>
</dbReference>
<dbReference type="InterPro" id="IPR006808">
    <property type="entry name" value="ATP_synth_F0_gsu_mt"/>
</dbReference>
<dbReference type="PANTHER" id="PTHR12386">
    <property type="entry name" value="ATP SYNTHASE SUBUNIT"/>
    <property type="match status" value="1"/>
</dbReference>
<dbReference type="Pfam" id="PF04718">
    <property type="entry name" value="ATP-synt_G"/>
    <property type="match status" value="1"/>
</dbReference>
<keyword id="KW-0066">ATP synthesis</keyword>
<keyword id="KW-0138">CF(0)</keyword>
<keyword id="KW-0375">Hydrogen ion transport</keyword>
<keyword id="KW-0406">Ion transport</keyword>
<keyword id="KW-0472">Membrane</keyword>
<keyword id="KW-0496">Mitochondrion</keyword>
<keyword id="KW-1185">Reference proteome</keyword>
<keyword id="KW-0813">Transport</keyword>